<name>FBX43_XENLA</name>
<gene>
    <name type="primary">fbxo43</name>
    <name type="synonym">emi2</name>
    <name type="synonym">erp1</name>
    <name type="synonym">fbx26</name>
</gene>
<proteinExistence type="evidence at protein level"/>
<evidence type="ECO:0000250" key="1">
    <source>
        <dbReference type="UniProtKB" id="Q4G163"/>
    </source>
</evidence>
<evidence type="ECO:0000255" key="2">
    <source>
        <dbReference type="PROSITE-ProRule" id="PRU01220"/>
    </source>
</evidence>
<evidence type="ECO:0000256" key="3">
    <source>
        <dbReference type="SAM" id="MobiDB-lite"/>
    </source>
</evidence>
<evidence type="ECO:0000269" key="4">
    <source>
    </source>
</evidence>
<evidence type="ECO:0000269" key="5">
    <source>
    </source>
</evidence>
<evidence type="ECO:0000269" key="6">
    <source>
    </source>
</evidence>
<evidence type="ECO:0000269" key="7">
    <source>
    </source>
</evidence>
<evidence type="ECO:0000269" key="8">
    <source>
    </source>
</evidence>
<evidence type="ECO:0000305" key="9"/>
<evidence type="ECO:0000305" key="10">
    <source>
    </source>
</evidence>
<sequence>MANLLENFAAHHSMTAGAKKKADHQDTSVSQDSGYSDSLKGFSPDSHKSGNFLETVTEGYENSENIDPTLILSPIKYELSWGADTRESKQLAPLYETPRVGKKEFSLRRRLLISKATSGGNLDFDVSVCSAESCGREKSLRRIPSHEGSLSNSFADSPRDGSYEPIATSTLKTESESGTSCKKWRLSFAQQRSSTLDDSKSDSIPLPEVENISPVQHSLASSTDDSILYEETIFGAPTTPTCNFIVKEEFQTPISNLAANFRFNLCTPDVGHVSDFDISVTEDSAFHSLSLDKSQDSITDHEGSFQELIQKPRETSKAVNNKSRLRKLDRCRRLSTLRERGSQSEVEEEGNEVPVLSSAYKLKVARASVDEENEFSSDESRVHSLLSSDDLTGKPALRVLHEMLLRSTRKRPQQATVQDLLGSSGCFELPEDSLSRLIGRKMGLETFDILAELKNRNLKHILASILDLVNAASICSMCRVSRDWRDVVLQDKSAHQRRKAYIKKLKTEAEQGRQLSFEDSATRLNILSRSALRSVQIQARSAFRTPTSSLTPGDNKSIHSASKHQEYLKVAKTLFTDEALKPCPRCQYPAKYQALKKRGTCSRKDCGFDFCSLCLCTFHGSKECGTGSAKRIPKKEALPGSAQSKRNLKRL</sequence>
<protein>
    <recommendedName>
        <fullName>F-box only protein 43</fullName>
    </recommendedName>
    <alternativeName>
        <fullName>Early mitotic inhibitor 2</fullName>
    </alternativeName>
    <alternativeName>
        <fullName>Emi1-related protein 1</fullName>
    </alternativeName>
    <alternativeName>
        <fullName>F-box protein 26</fullName>
    </alternativeName>
    <alternativeName>
        <fullName>Xerp1</fullName>
    </alternativeName>
</protein>
<dbReference type="EMBL" id="AF176353">
    <property type="protein sequence ID" value="AAF14554.1"/>
    <property type="status" value="ALT_SEQ"/>
    <property type="molecule type" value="mRNA"/>
</dbReference>
<dbReference type="EMBL" id="AF450296">
    <property type="protein sequence ID" value="AAN76807.1"/>
    <property type="molecule type" value="mRNA"/>
</dbReference>
<dbReference type="EMBL" id="AY928267">
    <property type="protein sequence ID" value="AAX18427.1"/>
    <property type="molecule type" value="mRNA"/>
</dbReference>
<dbReference type="RefSeq" id="NP_001093338.1">
    <property type="nucleotide sequence ID" value="NM_001099868.1"/>
</dbReference>
<dbReference type="RefSeq" id="XP_018121628.1">
    <property type="nucleotide sequence ID" value="XM_018266139.1"/>
</dbReference>
<dbReference type="BioGRID" id="674682">
    <property type="interactions" value="7"/>
</dbReference>
<dbReference type="DIP" id="DIP-46217N"/>
<dbReference type="IntAct" id="Q8AXF4">
    <property type="interactions" value="10"/>
</dbReference>
<dbReference type="MINT" id="Q8AXF4"/>
<dbReference type="iPTMnet" id="Q8AXF4"/>
<dbReference type="GeneID" id="100101275"/>
<dbReference type="KEGG" id="xla:100101275"/>
<dbReference type="AGR" id="Xenbase:XB-GENE-951950"/>
<dbReference type="CTD" id="100101275"/>
<dbReference type="Xenbase" id="XB-GENE-951950">
    <property type="gene designation" value="fbxo43.L"/>
</dbReference>
<dbReference type="OrthoDB" id="9984940at2759"/>
<dbReference type="UniPathway" id="UPA00143"/>
<dbReference type="Proteomes" id="UP000186698">
    <property type="component" value="Chromosome 6L"/>
</dbReference>
<dbReference type="Bgee" id="100101275">
    <property type="expression patterns" value="Expressed in egg cell and 7 other cell types or tissues"/>
</dbReference>
<dbReference type="GO" id="GO:0005634">
    <property type="term" value="C:nucleus"/>
    <property type="evidence" value="ECO:0000318"/>
    <property type="project" value="GO_Central"/>
</dbReference>
<dbReference type="GO" id="GO:0008270">
    <property type="term" value="F:zinc ion binding"/>
    <property type="evidence" value="ECO:0007669"/>
    <property type="project" value="UniProtKB-KW"/>
</dbReference>
<dbReference type="GO" id="GO:0051321">
    <property type="term" value="P:meiotic cell cycle"/>
    <property type="evidence" value="ECO:0007669"/>
    <property type="project" value="UniProtKB-KW"/>
</dbReference>
<dbReference type="GO" id="GO:0010948">
    <property type="term" value="P:negative regulation of cell cycle process"/>
    <property type="evidence" value="ECO:0000250"/>
    <property type="project" value="UniProtKB"/>
</dbReference>
<dbReference type="GO" id="GO:0045835">
    <property type="term" value="P:negative regulation of meiotic nuclear division"/>
    <property type="evidence" value="ECO:0000318"/>
    <property type="project" value="GO_Central"/>
</dbReference>
<dbReference type="GO" id="GO:0016567">
    <property type="term" value="P:protein ubiquitination"/>
    <property type="evidence" value="ECO:0007669"/>
    <property type="project" value="UniProtKB-UniPathway"/>
</dbReference>
<dbReference type="GO" id="GO:0007088">
    <property type="term" value="P:regulation of mitotic nuclear division"/>
    <property type="evidence" value="ECO:0000318"/>
    <property type="project" value="GO_Central"/>
</dbReference>
<dbReference type="CDD" id="cd20365">
    <property type="entry name" value="BRcat_RBR_FBXO43"/>
    <property type="match status" value="1"/>
</dbReference>
<dbReference type="CDD" id="cd22171">
    <property type="entry name" value="F-box_FBXO43"/>
    <property type="match status" value="1"/>
</dbReference>
<dbReference type="FunFam" id="2.20.25.20:FF:000006">
    <property type="entry name" value="F-box only protein 5"/>
    <property type="match status" value="1"/>
</dbReference>
<dbReference type="FunFam" id="1.20.1280.50:FF:000046">
    <property type="entry name" value="F-box protein 43"/>
    <property type="match status" value="1"/>
</dbReference>
<dbReference type="Gene3D" id="1.20.1280.50">
    <property type="match status" value="1"/>
</dbReference>
<dbReference type="Gene3D" id="2.20.25.20">
    <property type="match status" value="1"/>
</dbReference>
<dbReference type="InterPro" id="IPR047147">
    <property type="entry name" value="FBX5_43"/>
</dbReference>
<dbReference type="InterPro" id="IPR002867">
    <property type="entry name" value="IBR_dom"/>
</dbReference>
<dbReference type="InterPro" id="IPR044064">
    <property type="entry name" value="ZF_ZBR"/>
</dbReference>
<dbReference type="PANTHER" id="PTHR15493:SF1">
    <property type="entry name" value="F-BOX ONLY PROTEIN 43"/>
    <property type="match status" value="1"/>
</dbReference>
<dbReference type="PANTHER" id="PTHR15493">
    <property type="entry name" value="F-BOX ONLY PROTEIN 5 AND 43"/>
    <property type="match status" value="1"/>
</dbReference>
<dbReference type="SMART" id="SM00647">
    <property type="entry name" value="IBR"/>
    <property type="match status" value="1"/>
</dbReference>
<dbReference type="SUPFAM" id="SSF57850">
    <property type="entry name" value="RING/U-box"/>
    <property type="match status" value="1"/>
</dbReference>
<dbReference type="PROSITE" id="PS51872">
    <property type="entry name" value="ZF_ZBR"/>
    <property type="match status" value="1"/>
</dbReference>
<reference key="1">
    <citation type="journal article" date="1999" name="Curr. Biol.">
        <title>Identification of novel F-box proteins in Xenopus laevis.</title>
        <authorList>
            <person name="Regan-Reimann J.D."/>
            <person name="Duong Q.V."/>
            <person name="Jackson P.K."/>
        </authorList>
    </citation>
    <scope>NUCLEOTIDE SEQUENCE [MRNA]</scope>
</reference>
<reference key="2">
    <citation type="journal article" date="2005" name="Genes Dev.">
        <title>Xenopus polo-like kinase Plx1 regulates XErp1, a novel inhibitor of APC/C activity.</title>
        <authorList>
            <person name="Schmidt A."/>
            <person name="Duncan P.I."/>
            <person name="Rauh N.R."/>
            <person name="Sauer G."/>
            <person name="Fry A.M."/>
            <person name="Nigg E.A."/>
            <person name="Mayer T.U."/>
        </authorList>
    </citation>
    <scope>NUCLEOTIDE SEQUENCE [MRNA]</scope>
    <scope>IDENTIFICATION BY MASS SPECTROMETRY</scope>
    <scope>PHOSPHORYLATION</scope>
    <scope>UBIQUITINATION</scope>
    <scope>DEVELOPMENTAL STAGE</scope>
    <scope>FUNCTION</scope>
</reference>
<reference key="3">
    <citation type="journal article" date="2005" name="Proc. Natl. Acad. Sci. U.S.A.">
        <title>A role for the anaphase-promoting complex inhibitor Emi2/XErp1, a homolog of early mitotic inhibitor 1, in cytostatic factor arrest of Xenopus eggs.</title>
        <authorList>
            <person name="Tung J.J."/>
            <person name="Hansen D.V."/>
            <person name="Ban K.H."/>
            <person name="Loktev A.V."/>
            <person name="Summers M.K."/>
            <person name="Adler J.R. III"/>
            <person name="Jackson P.K."/>
        </authorList>
    </citation>
    <scope>NUCLEOTIDE SEQUENCE [MRNA]</scope>
    <scope>FUNCTION</scope>
    <scope>PHOSPHORYLATION AT SER-33</scope>
    <scope>UBIQUITINATION</scope>
    <scope>MUTAGENESIS OF 32-ASP-SER-33 AND 283-ASP-SER-284</scope>
</reference>
<reference key="4">
    <citation type="journal article" date="2005" name="Curr. Biol.">
        <title>Calcium elevation at fertilization coordinates phosphorylation of XErp1/Emi2 by Plx1 and CaMK II to release metaphase arrest by cytostatic factor.</title>
        <authorList>
            <person name="Liu J."/>
            <person name="Maller J.L."/>
        </authorList>
    </citation>
    <scope>PHOSPHORYLATION</scope>
</reference>
<reference key="5">
    <citation type="journal article" date="2005" name="Nature">
        <title>Calcium triggers exit from meiosis II by targeting the APC/C inhibitor XErp1 for degradation.</title>
        <authorList>
            <person name="Rauh N.R."/>
            <person name="Schmidt A."/>
            <person name="Bormann J."/>
            <person name="Nigg E.A."/>
            <person name="Mayer T.U."/>
        </authorList>
    </citation>
    <scope>PHOSPHORYLATION AT THR-195</scope>
    <scope>MUTAGENESIS OF SER-194; THR-195 AND THR-336</scope>
</reference>
<reference key="6">
    <citation type="journal article" date="2006" name="Proc. Natl. Acad. Sci. U.S.A.">
        <title>CaMKII and polo-like kinase 1 sequentially phosphorylate the cytostatic factor Emi2/XErp1 to trigger its destruction and meiotic exit.</title>
        <authorList>
            <person name="Hansen D.V."/>
            <person name="Tung J.J."/>
            <person name="Jackson P.K."/>
        </authorList>
    </citation>
    <scope>PHOSPHORYLATION AT THR-195</scope>
    <scope>MUTAGENESIS OF 32-ASP-SER-33</scope>
</reference>
<comment type="function">
    <text evidence="4 5">Required to prevent anaphase onset in cytostatic factor-arrested oocytes. Inhibits the anaphase-promoting complex/cyclosome (APC/C) ubiquitin ligase and prevents cyclin degradation. Probably recognizes and binds to some phosphorylated proteins and promotes their ubiquitination and degradation.</text>
</comment>
<comment type="pathway">
    <text>Protein modification; protein ubiquitination.</text>
</comment>
<comment type="subunit">
    <text evidence="1 4">Part of a SCF (SKP1-cullin-F-box) protein ligase complex (PubMed:15713843). Interaction with SKP1 does not occur (By similarity).</text>
</comment>
<comment type="interaction">
    <interactant intactId="EBI-8609042">
        <id>Q8AXF4</id>
    </interactant>
    <interactant intactId="EBI-995003">
        <id>Q6GQ04</id>
        <label>MGC80529</label>
    </interactant>
    <organismsDiffer>false</organismsDiffer>
    <experiments>3</experiments>
</comment>
<comment type="interaction">
    <interactant intactId="EBI-8609042">
        <id>Q8AXF4</id>
    </interactant>
    <interactant intactId="EBI-15659454">
        <id>Q6IRD3</id>
        <label>ppp2r2a.S</label>
    </interactant>
    <organismsDiffer>false</organismsDiffer>
    <experiments>2</experiments>
</comment>
<comment type="interaction">
    <interactant intactId="EBI-8609042">
        <id>Q8AXF4</id>
    </interactant>
    <interactant intactId="EBI-16014794">
        <id>Q5XH34</id>
        <label>ppp2r5e.S</label>
    </interactant>
    <organismsDiffer>false</organismsDiffer>
    <experiments>2</experiments>
</comment>
<comment type="interaction">
    <interactant intactId="EBI-8609042">
        <id>Q8AXF4</id>
    </interactant>
    <interactant intactId="EBI-15630603">
        <id>Q9PTN1</id>
        <label>rps6ka3.L</label>
    </interactant>
    <organismsDiffer>false</organismsDiffer>
    <experiments>3</experiments>
</comment>
<comment type="developmental stage">
    <text evidence="4">Accumulates during oocyte maturation.</text>
</comment>
<comment type="PTM">
    <text evidence="4 5 6 7 8">Phosphorylated on Thr-195 by CaMK2 in response to calcium during egg activation, which promotes subsequent phosphorylation by PLK1, ubiquitination and protesomal degradation.</text>
</comment>
<comment type="PTM">
    <text>Ubiquitinated by FBXW1 during egg activation, which promotes proteasomal degradation.</text>
</comment>
<comment type="sequence caution" evidence="9">
    <conflict type="frameshift">
        <sequence resource="EMBL-CDS" id="AAF14554"/>
    </conflict>
</comment>
<comment type="sequence caution" evidence="9">
    <conflict type="miscellaneous discrepancy">
        <sequence resource="EMBL-CDS" id="AAF14554"/>
    </conflict>
    <text>Sequencing errors.</text>
</comment>
<keyword id="KW-0469">Meiosis</keyword>
<keyword id="KW-0479">Metal-binding</keyword>
<keyword id="KW-0597">Phosphoprotein</keyword>
<keyword id="KW-1185">Reference proteome</keyword>
<keyword id="KW-0832">Ubl conjugation</keyword>
<keyword id="KW-0833">Ubl conjugation pathway</keyword>
<keyword id="KW-0862">Zinc</keyword>
<keyword id="KW-0863">Zinc-finger</keyword>
<organism>
    <name type="scientific">Xenopus laevis</name>
    <name type="common">African clawed frog</name>
    <dbReference type="NCBI Taxonomy" id="8355"/>
    <lineage>
        <taxon>Eukaryota</taxon>
        <taxon>Metazoa</taxon>
        <taxon>Chordata</taxon>
        <taxon>Craniata</taxon>
        <taxon>Vertebrata</taxon>
        <taxon>Euteleostomi</taxon>
        <taxon>Amphibia</taxon>
        <taxon>Batrachia</taxon>
        <taxon>Anura</taxon>
        <taxon>Pipoidea</taxon>
        <taxon>Pipidae</taxon>
        <taxon>Xenopodinae</taxon>
        <taxon>Xenopus</taxon>
        <taxon>Xenopus</taxon>
    </lineage>
</organism>
<feature type="chain" id="PRO_0000247236" description="F-box only protein 43">
    <location>
        <begin position="1"/>
        <end position="651"/>
    </location>
</feature>
<feature type="domain" description="F-box">
    <location>
        <begin position="424"/>
        <end position="499"/>
    </location>
</feature>
<feature type="zinc finger region" description="ZBR-type" evidence="2">
    <location>
        <begin position="579"/>
        <end position="627"/>
    </location>
</feature>
<feature type="region of interest" description="Disordered" evidence="3">
    <location>
        <begin position="14"/>
        <end position="42"/>
    </location>
</feature>
<feature type="region of interest" description="Disordered" evidence="3">
    <location>
        <begin position="140"/>
        <end position="171"/>
    </location>
</feature>
<feature type="compositionally biased region" description="Polar residues" evidence="3">
    <location>
        <begin position="27"/>
        <end position="36"/>
    </location>
</feature>
<feature type="binding site" evidence="2">
    <location>
        <position position="583"/>
    </location>
    <ligand>
        <name>Zn(2+)</name>
        <dbReference type="ChEBI" id="CHEBI:29105"/>
        <label>1</label>
    </ligand>
</feature>
<feature type="binding site" evidence="2">
    <location>
        <position position="586"/>
    </location>
    <ligand>
        <name>Zn(2+)</name>
        <dbReference type="ChEBI" id="CHEBI:29105"/>
        <label>1</label>
    </ligand>
</feature>
<feature type="binding site" evidence="2">
    <location>
        <position position="601"/>
    </location>
    <ligand>
        <name>Zn(2+)</name>
        <dbReference type="ChEBI" id="CHEBI:29105"/>
        <label>1</label>
    </ligand>
</feature>
<feature type="binding site" evidence="2">
    <location>
        <position position="606"/>
    </location>
    <ligand>
        <name>Zn(2+)</name>
        <dbReference type="ChEBI" id="CHEBI:29105"/>
        <label>1</label>
    </ligand>
</feature>
<feature type="binding site" evidence="2">
    <location>
        <position position="611"/>
    </location>
    <ligand>
        <name>Zn(2+)</name>
        <dbReference type="ChEBI" id="CHEBI:29105"/>
        <label>2</label>
    </ligand>
</feature>
<feature type="binding site" evidence="2">
    <location>
        <position position="614"/>
    </location>
    <ligand>
        <name>Zn(2+)</name>
        <dbReference type="ChEBI" id="CHEBI:29105"/>
        <label>2</label>
    </ligand>
</feature>
<feature type="binding site" evidence="2">
    <location>
        <position position="619"/>
    </location>
    <ligand>
        <name>Zn(2+)</name>
        <dbReference type="ChEBI" id="CHEBI:29105"/>
        <label>2</label>
    </ligand>
</feature>
<feature type="binding site" evidence="2">
    <location>
        <position position="624"/>
    </location>
    <ligand>
        <name>Zn(2+)</name>
        <dbReference type="ChEBI" id="CHEBI:29105"/>
        <label>2</label>
    </ligand>
</feature>
<feature type="modified residue" description="Phosphoserine; by PLK1" evidence="10">
    <location>
        <position position="33"/>
    </location>
</feature>
<feature type="modified residue" description="Phosphothreonine; by CaMK2" evidence="7 8">
    <location>
        <position position="195"/>
    </location>
</feature>
<feature type="mutagenesis site" description="Prevents ubiquitination and degradation in response to calcium." evidence="5 8">
    <original>DS</original>
    <variation>AA</variation>
    <location>
        <begin position="32"/>
        <end position="33"/>
    </location>
</feature>
<feature type="mutagenesis site" description="Prevents ubiquitination and degradation in response to calcium." evidence="7">
    <original>S</original>
    <variation>A</variation>
    <location>
        <position position="194"/>
    </location>
</feature>
<feature type="mutagenesis site" description="Prevents ubiquitination and degradation in response to calcium." evidence="7">
    <original>T</original>
    <variation>A</variation>
    <location>
        <position position="195"/>
    </location>
</feature>
<feature type="mutagenesis site" description="No effect on ubiquitination and degradation in response to calcium." evidence="5">
    <original>DS</original>
    <variation>AA</variation>
    <location>
        <begin position="283"/>
        <end position="284"/>
    </location>
</feature>
<feature type="mutagenesis site" description="No effect on ubiquitination and degradation in response to calcium." evidence="7">
    <original>T</original>
    <variation>A</variation>
    <location>
        <position position="336"/>
    </location>
</feature>
<accession>Q8AXF4</accession>
<accession>Q9PTL8</accession>